<proteinExistence type="inferred from homology"/>
<gene>
    <name evidence="1" type="primary">lgt</name>
    <name type="ordered locus">SCH_2941</name>
</gene>
<reference key="1">
    <citation type="journal article" date="2005" name="Nucleic Acids Res.">
        <title>The genome sequence of Salmonella enterica serovar Choleraesuis, a highly invasive and resistant zoonotic pathogen.</title>
        <authorList>
            <person name="Chiu C.-H."/>
            <person name="Tang P."/>
            <person name="Chu C."/>
            <person name="Hu S."/>
            <person name="Bao Q."/>
            <person name="Yu J."/>
            <person name="Chou Y.-Y."/>
            <person name="Wang H.-S."/>
            <person name="Lee Y.-S."/>
        </authorList>
    </citation>
    <scope>NUCLEOTIDE SEQUENCE [LARGE SCALE GENOMIC DNA]</scope>
    <source>
        <strain>SC-B67</strain>
    </source>
</reference>
<sequence length="291" mass="33041">MTSSYLHFPDFDPVIFSIGPVALHWYGLMYLVGFVFAMWLAVRRANRPGSGWTKNEVENLLYAGFLGVFLGGRIGYVLFYNFPLFLDNPLYLFRVWDGGMSFHGGLIGVILVMIIFARRTKRSFFQVSDFIAPLIPFGLGAGRLGNFINGELWGRVDPDFRFAMLFPGSRAEDIALLPSHPQWQPIFDTYGVLPRHPSQLYELALEGVVLFIILNLFIRKPRPMGAVSGLFLIGYGALRIIVEFFRQPDAQFTGAWVQYISMGQILSIPMIIAGAIMMVWAYRRRPQQHVS</sequence>
<evidence type="ECO:0000255" key="1">
    <source>
        <dbReference type="HAMAP-Rule" id="MF_01147"/>
    </source>
</evidence>
<organism>
    <name type="scientific">Salmonella choleraesuis (strain SC-B67)</name>
    <dbReference type="NCBI Taxonomy" id="321314"/>
    <lineage>
        <taxon>Bacteria</taxon>
        <taxon>Pseudomonadati</taxon>
        <taxon>Pseudomonadota</taxon>
        <taxon>Gammaproteobacteria</taxon>
        <taxon>Enterobacterales</taxon>
        <taxon>Enterobacteriaceae</taxon>
        <taxon>Salmonella</taxon>
    </lineage>
</organism>
<feature type="chain" id="PRO_1000053496" description="Phosphatidylglycerol--prolipoprotein diacylglyceryl transferase">
    <location>
        <begin position="1"/>
        <end position="291"/>
    </location>
</feature>
<feature type="transmembrane region" description="Helical" evidence="1">
    <location>
        <begin position="21"/>
        <end position="41"/>
    </location>
</feature>
<feature type="transmembrane region" description="Helical" evidence="1">
    <location>
        <begin position="60"/>
        <end position="80"/>
    </location>
</feature>
<feature type="transmembrane region" description="Helical" evidence="1">
    <location>
        <begin position="96"/>
        <end position="116"/>
    </location>
</feature>
<feature type="transmembrane region" description="Helical" evidence="1">
    <location>
        <begin position="130"/>
        <end position="150"/>
    </location>
</feature>
<feature type="transmembrane region" description="Helical" evidence="1">
    <location>
        <begin position="198"/>
        <end position="218"/>
    </location>
</feature>
<feature type="transmembrane region" description="Helical" evidence="1">
    <location>
        <begin position="225"/>
        <end position="245"/>
    </location>
</feature>
<feature type="transmembrane region" description="Helical" evidence="1">
    <location>
        <begin position="260"/>
        <end position="280"/>
    </location>
</feature>
<feature type="binding site" evidence="1">
    <location>
        <position position="143"/>
    </location>
    <ligand>
        <name>a 1,2-diacyl-sn-glycero-3-phospho-(1'-sn-glycerol)</name>
        <dbReference type="ChEBI" id="CHEBI:64716"/>
    </ligand>
</feature>
<name>LGT_SALCH</name>
<keyword id="KW-0997">Cell inner membrane</keyword>
<keyword id="KW-1003">Cell membrane</keyword>
<keyword id="KW-0472">Membrane</keyword>
<keyword id="KW-0808">Transferase</keyword>
<keyword id="KW-0812">Transmembrane</keyword>
<keyword id="KW-1133">Transmembrane helix</keyword>
<protein>
    <recommendedName>
        <fullName evidence="1">Phosphatidylglycerol--prolipoprotein diacylglyceryl transferase</fullName>
        <ecNumber evidence="1">2.5.1.145</ecNumber>
    </recommendedName>
</protein>
<accession>Q57KB5</accession>
<comment type="function">
    <text evidence="1">Catalyzes the transfer of the diacylglyceryl group from phosphatidylglycerol to the sulfhydryl group of the N-terminal cysteine of a prolipoprotein, the first step in the formation of mature lipoproteins.</text>
</comment>
<comment type="catalytic activity">
    <reaction evidence="1">
        <text>L-cysteinyl-[prolipoprotein] + a 1,2-diacyl-sn-glycero-3-phospho-(1'-sn-glycerol) = an S-1,2-diacyl-sn-glyceryl-L-cysteinyl-[prolipoprotein] + sn-glycerol 1-phosphate + H(+)</text>
        <dbReference type="Rhea" id="RHEA:56712"/>
        <dbReference type="Rhea" id="RHEA-COMP:14679"/>
        <dbReference type="Rhea" id="RHEA-COMP:14680"/>
        <dbReference type="ChEBI" id="CHEBI:15378"/>
        <dbReference type="ChEBI" id="CHEBI:29950"/>
        <dbReference type="ChEBI" id="CHEBI:57685"/>
        <dbReference type="ChEBI" id="CHEBI:64716"/>
        <dbReference type="ChEBI" id="CHEBI:140658"/>
        <dbReference type="EC" id="2.5.1.145"/>
    </reaction>
</comment>
<comment type="pathway">
    <text evidence="1">Protein modification; lipoprotein biosynthesis (diacylglyceryl transfer).</text>
</comment>
<comment type="subcellular location">
    <subcellularLocation>
        <location evidence="1">Cell inner membrane</location>
        <topology evidence="1">Multi-pass membrane protein</topology>
    </subcellularLocation>
</comment>
<comment type="similarity">
    <text evidence="1">Belongs to the Lgt family.</text>
</comment>
<dbReference type="EC" id="2.5.1.145" evidence="1"/>
<dbReference type="EMBL" id="AE017220">
    <property type="protein sequence ID" value="AAX66847.1"/>
    <property type="molecule type" value="Genomic_DNA"/>
</dbReference>
<dbReference type="RefSeq" id="WP_011264378.1">
    <property type="nucleotide sequence ID" value="NC_006905.1"/>
</dbReference>
<dbReference type="SMR" id="Q57KB5"/>
<dbReference type="KEGG" id="sec:SCH_2941"/>
<dbReference type="HOGENOM" id="CLU_013386_1_0_6"/>
<dbReference type="UniPathway" id="UPA00664"/>
<dbReference type="Proteomes" id="UP000000538">
    <property type="component" value="Chromosome"/>
</dbReference>
<dbReference type="GO" id="GO:0005886">
    <property type="term" value="C:plasma membrane"/>
    <property type="evidence" value="ECO:0007669"/>
    <property type="project" value="UniProtKB-SubCell"/>
</dbReference>
<dbReference type="GO" id="GO:0008961">
    <property type="term" value="F:phosphatidylglycerol-prolipoprotein diacylglyceryl transferase activity"/>
    <property type="evidence" value="ECO:0007669"/>
    <property type="project" value="UniProtKB-UniRule"/>
</dbReference>
<dbReference type="GO" id="GO:0042158">
    <property type="term" value="P:lipoprotein biosynthetic process"/>
    <property type="evidence" value="ECO:0007669"/>
    <property type="project" value="UniProtKB-UniRule"/>
</dbReference>
<dbReference type="HAMAP" id="MF_01147">
    <property type="entry name" value="Lgt"/>
    <property type="match status" value="1"/>
</dbReference>
<dbReference type="InterPro" id="IPR001640">
    <property type="entry name" value="Lgt"/>
</dbReference>
<dbReference type="NCBIfam" id="TIGR00544">
    <property type="entry name" value="lgt"/>
    <property type="match status" value="1"/>
</dbReference>
<dbReference type="PANTHER" id="PTHR30589:SF0">
    <property type="entry name" value="PHOSPHATIDYLGLYCEROL--PROLIPOPROTEIN DIACYLGLYCERYL TRANSFERASE"/>
    <property type="match status" value="1"/>
</dbReference>
<dbReference type="PANTHER" id="PTHR30589">
    <property type="entry name" value="PROLIPOPROTEIN DIACYLGLYCERYL TRANSFERASE"/>
    <property type="match status" value="1"/>
</dbReference>
<dbReference type="Pfam" id="PF01790">
    <property type="entry name" value="LGT"/>
    <property type="match status" value="1"/>
</dbReference>
<dbReference type="PROSITE" id="PS01311">
    <property type="entry name" value="LGT"/>
    <property type="match status" value="1"/>
</dbReference>